<name>RL28_SYNFM</name>
<reference key="1">
    <citation type="submission" date="2006-10" db="EMBL/GenBank/DDBJ databases">
        <title>Complete sequence of Syntrophobacter fumaroxidans MPOB.</title>
        <authorList>
            <consortium name="US DOE Joint Genome Institute"/>
            <person name="Copeland A."/>
            <person name="Lucas S."/>
            <person name="Lapidus A."/>
            <person name="Barry K."/>
            <person name="Detter J.C."/>
            <person name="Glavina del Rio T."/>
            <person name="Hammon N."/>
            <person name="Israni S."/>
            <person name="Pitluck S."/>
            <person name="Goltsman E.G."/>
            <person name="Martinez M."/>
            <person name="Schmutz J."/>
            <person name="Larimer F."/>
            <person name="Land M."/>
            <person name="Hauser L."/>
            <person name="Kyrpides N."/>
            <person name="Kim E."/>
            <person name="Boone D.R."/>
            <person name="Brockman F."/>
            <person name="Culley D."/>
            <person name="Ferry J."/>
            <person name="Gunsalus R."/>
            <person name="McInerney M.J."/>
            <person name="Morrison M."/>
            <person name="Plugge C."/>
            <person name="Rohlin L."/>
            <person name="Scholten J."/>
            <person name="Sieber J."/>
            <person name="Stams A.J.M."/>
            <person name="Worm P."/>
            <person name="Henstra A.M."/>
            <person name="Richardson P."/>
        </authorList>
    </citation>
    <scope>NUCLEOTIDE SEQUENCE [LARGE SCALE GENOMIC DNA]</scope>
    <source>
        <strain>DSM 10017 / MPOB</strain>
    </source>
</reference>
<organism>
    <name type="scientific">Syntrophobacter fumaroxidans (strain DSM 10017 / MPOB)</name>
    <dbReference type="NCBI Taxonomy" id="335543"/>
    <lineage>
        <taxon>Bacteria</taxon>
        <taxon>Pseudomonadati</taxon>
        <taxon>Thermodesulfobacteriota</taxon>
        <taxon>Syntrophobacteria</taxon>
        <taxon>Syntrophobacterales</taxon>
        <taxon>Syntrophobacteraceae</taxon>
        <taxon>Syntrophobacter</taxon>
    </lineage>
</organism>
<keyword id="KW-1185">Reference proteome</keyword>
<keyword id="KW-0687">Ribonucleoprotein</keyword>
<keyword id="KW-0689">Ribosomal protein</keyword>
<dbReference type="EMBL" id="CP000478">
    <property type="protein sequence ID" value="ABK18947.1"/>
    <property type="molecule type" value="Genomic_DNA"/>
</dbReference>
<dbReference type="RefSeq" id="WP_011700072.1">
    <property type="nucleotide sequence ID" value="NC_008554.1"/>
</dbReference>
<dbReference type="SMR" id="A0LNE5"/>
<dbReference type="STRING" id="335543.Sfum_3274"/>
<dbReference type="KEGG" id="sfu:Sfum_3274"/>
<dbReference type="eggNOG" id="COG0227">
    <property type="taxonomic scope" value="Bacteria"/>
</dbReference>
<dbReference type="HOGENOM" id="CLU_064548_7_0_7"/>
<dbReference type="InParanoid" id="A0LNE5"/>
<dbReference type="OrthoDB" id="9805609at2"/>
<dbReference type="Proteomes" id="UP000001784">
    <property type="component" value="Chromosome"/>
</dbReference>
<dbReference type="GO" id="GO:1990904">
    <property type="term" value="C:ribonucleoprotein complex"/>
    <property type="evidence" value="ECO:0007669"/>
    <property type="project" value="UniProtKB-KW"/>
</dbReference>
<dbReference type="GO" id="GO:0005840">
    <property type="term" value="C:ribosome"/>
    <property type="evidence" value="ECO:0007669"/>
    <property type="project" value="UniProtKB-KW"/>
</dbReference>
<dbReference type="GO" id="GO:0003735">
    <property type="term" value="F:structural constituent of ribosome"/>
    <property type="evidence" value="ECO:0007669"/>
    <property type="project" value="InterPro"/>
</dbReference>
<dbReference type="GO" id="GO:0006412">
    <property type="term" value="P:translation"/>
    <property type="evidence" value="ECO:0007669"/>
    <property type="project" value="UniProtKB-UniRule"/>
</dbReference>
<dbReference type="Gene3D" id="2.20.150.30">
    <property type="match status" value="1"/>
</dbReference>
<dbReference type="Gene3D" id="2.30.170.40">
    <property type="entry name" value="Ribosomal protein L28/L24"/>
    <property type="match status" value="1"/>
</dbReference>
<dbReference type="HAMAP" id="MF_00373">
    <property type="entry name" value="Ribosomal_bL28"/>
    <property type="match status" value="1"/>
</dbReference>
<dbReference type="InterPro" id="IPR050096">
    <property type="entry name" value="Bacterial_rp_bL28"/>
</dbReference>
<dbReference type="InterPro" id="IPR026569">
    <property type="entry name" value="Ribosomal_bL28"/>
</dbReference>
<dbReference type="InterPro" id="IPR034704">
    <property type="entry name" value="Ribosomal_bL28/bL31-like_sf"/>
</dbReference>
<dbReference type="InterPro" id="IPR001383">
    <property type="entry name" value="Ribosomal_bL28_bact-type"/>
</dbReference>
<dbReference type="InterPro" id="IPR037147">
    <property type="entry name" value="Ribosomal_bL28_sf"/>
</dbReference>
<dbReference type="NCBIfam" id="TIGR00009">
    <property type="entry name" value="L28"/>
    <property type="match status" value="1"/>
</dbReference>
<dbReference type="PANTHER" id="PTHR39080">
    <property type="entry name" value="50S RIBOSOMAL PROTEIN L28"/>
    <property type="match status" value="1"/>
</dbReference>
<dbReference type="PANTHER" id="PTHR39080:SF1">
    <property type="entry name" value="LARGE RIBOSOMAL SUBUNIT PROTEIN BL28A"/>
    <property type="match status" value="1"/>
</dbReference>
<dbReference type="Pfam" id="PF00830">
    <property type="entry name" value="Ribosomal_L28"/>
    <property type="match status" value="1"/>
</dbReference>
<dbReference type="SUPFAM" id="SSF143800">
    <property type="entry name" value="L28p-like"/>
    <property type="match status" value="1"/>
</dbReference>
<proteinExistence type="inferred from homology"/>
<gene>
    <name evidence="1" type="primary">rpmB</name>
    <name type="ordered locus">Sfum_3274</name>
</gene>
<comment type="similarity">
    <text evidence="1">Belongs to the bacterial ribosomal protein bL28 family.</text>
</comment>
<accession>A0LNE5</accession>
<protein>
    <recommendedName>
        <fullName evidence="1">Large ribosomal subunit protein bL28</fullName>
    </recommendedName>
    <alternativeName>
        <fullName evidence="2">50S ribosomal protein L28</fullName>
    </alternativeName>
</protein>
<evidence type="ECO:0000255" key="1">
    <source>
        <dbReference type="HAMAP-Rule" id="MF_00373"/>
    </source>
</evidence>
<evidence type="ECO:0000305" key="2"/>
<sequence>MSRKCEFCGKEPHVGNNVSHANNKTKRLWYPNLQTVRHMDKSGAVRRVKACTRCIRTGLVVKPA</sequence>
<feature type="chain" id="PRO_1000007382" description="Large ribosomal subunit protein bL28">
    <location>
        <begin position="1"/>
        <end position="64"/>
    </location>
</feature>